<comment type="function">
    <text evidence="1">Catalyzes the conversion of D-ribulose 5-phosphate to formate and 3,4-dihydroxy-2-butanone 4-phosphate.</text>
</comment>
<comment type="catalytic activity">
    <reaction evidence="1">
        <text>D-ribulose 5-phosphate = (2S)-2-hydroxy-3-oxobutyl phosphate + formate + H(+)</text>
        <dbReference type="Rhea" id="RHEA:18457"/>
        <dbReference type="ChEBI" id="CHEBI:15378"/>
        <dbReference type="ChEBI" id="CHEBI:15740"/>
        <dbReference type="ChEBI" id="CHEBI:58121"/>
        <dbReference type="ChEBI" id="CHEBI:58830"/>
        <dbReference type="EC" id="4.1.99.12"/>
    </reaction>
</comment>
<comment type="cofactor">
    <cofactor evidence="1">
        <name>Mg(2+)</name>
        <dbReference type="ChEBI" id="CHEBI:18420"/>
    </cofactor>
    <cofactor evidence="1">
        <name>Mn(2+)</name>
        <dbReference type="ChEBI" id="CHEBI:29035"/>
    </cofactor>
    <text evidence="1">Binds 2 divalent metal cations per subunit. Magnesium or manganese.</text>
</comment>
<comment type="pathway">
    <text evidence="1">Cofactor biosynthesis; riboflavin biosynthesis; 2-hydroxy-3-oxobutyl phosphate from D-ribulose 5-phosphate: step 1/1.</text>
</comment>
<comment type="subunit">
    <text evidence="1">Homodimer.</text>
</comment>
<comment type="similarity">
    <text evidence="1">Belongs to the DHBP synthase family.</text>
</comment>
<reference key="1">
    <citation type="journal article" date="2000" name="J. Bacteriol.">
        <title>LuxR- and acyl-homoserine lactone controlled non-lux genes define a quorum-sensing regulon in Vibrio fischeri.</title>
        <authorList>
            <person name="Callahan S.M."/>
            <person name="Dunlap P.V."/>
        </authorList>
    </citation>
    <scope>NUCLEOTIDE SEQUENCE [GENOMIC DNA]</scope>
    <source>
        <strain>MJ-100</strain>
    </source>
</reference>
<evidence type="ECO:0000255" key="1">
    <source>
        <dbReference type="HAMAP-Rule" id="MF_00180"/>
    </source>
</evidence>
<gene>
    <name evidence="1" type="primary">ribB</name>
</gene>
<feature type="chain" id="PRO_0000151814" description="3,4-dihydroxy-2-butanone 4-phosphate synthase">
    <location>
        <begin position="1"/>
        <end position="217"/>
    </location>
</feature>
<feature type="binding site" evidence="1">
    <location>
        <begin position="40"/>
        <end position="41"/>
    </location>
    <ligand>
        <name>D-ribulose 5-phosphate</name>
        <dbReference type="ChEBI" id="CHEBI:58121"/>
    </ligand>
</feature>
<feature type="binding site" evidence="1">
    <location>
        <position position="41"/>
    </location>
    <ligand>
        <name>Mg(2+)</name>
        <dbReference type="ChEBI" id="CHEBI:18420"/>
        <label>1</label>
    </ligand>
</feature>
<feature type="binding site" evidence="1">
    <location>
        <position position="41"/>
    </location>
    <ligand>
        <name>Mg(2+)</name>
        <dbReference type="ChEBI" id="CHEBI:18420"/>
        <label>2</label>
    </ligand>
</feature>
<feature type="binding site" evidence="1">
    <location>
        <position position="45"/>
    </location>
    <ligand>
        <name>D-ribulose 5-phosphate</name>
        <dbReference type="ChEBI" id="CHEBI:58121"/>
    </ligand>
</feature>
<feature type="binding site" evidence="1">
    <location>
        <begin position="153"/>
        <end position="157"/>
    </location>
    <ligand>
        <name>D-ribulose 5-phosphate</name>
        <dbReference type="ChEBI" id="CHEBI:58121"/>
    </ligand>
</feature>
<feature type="binding site" evidence="1">
    <location>
        <position position="156"/>
    </location>
    <ligand>
        <name>Mg(2+)</name>
        <dbReference type="ChEBI" id="CHEBI:18420"/>
        <label>2</label>
    </ligand>
</feature>
<feature type="binding site" evidence="1">
    <location>
        <position position="177"/>
    </location>
    <ligand>
        <name>D-ribulose 5-phosphate</name>
        <dbReference type="ChEBI" id="CHEBI:58121"/>
    </ligand>
</feature>
<feature type="site" description="Essential for catalytic activity" evidence="1">
    <location>
        <position position="139"/>
    </location>
</feature>
<feature type="site" description="Essential for catalytic activity" evidence="1">
    <location>
        <position position="177"/>
    </location>
</feature>
<name>RIBB_ALIFS</name>
<proteinExistence type="inferred from homology"/>
<keyword id="KW-0456">Lyase</keyword>
<keyword id="KW-0460">Magnesium</keyword>
<keyword id="KW-0464">Manganese</keyword>
<keyword id="KW-0479">Metal-binding</keyword>
<keyword id="KW-0686">Riboflavin biosynthesis</keyword>
<protein>
    <recommendedName>
        <fullName evidence="1">3,4-dihydroxy-2-butanone 4-phosphate synthase</fullName>
        <shortName evidence="1">DHBP synthase</shortName>
        <ecNumber evidence="1">4.1.99.12</ecNumber>
    </recommendedName>
</protein>
<organism>
    <name type="scientific">Aliivibrio fischeri</name>
    <name type="common">Vibrio fischeri</name>
    <dbReference type="NCBI Taxonomy" id="668"/>
    <lineage>
        <taxon>Bacteria</taxon>
        <taxon>Pseudomonadati</taxon>
        <taxon>Pseudomonadota</taxon>
        <taxon>Gammaproteobacteria</taxon>
        <taxon>Vibrionales</taxon>
        <taxon>Vibrionaceae</taxon>
        <taxon>Aliivibrio</taxon>
    </lineage>
</organism>
<sequence>MKLNQDSLTSKFGSPIERVEQAIKSVQQGNGVLLLDDESRENEGDLIYSVDHLTSEQMALMIRSCSGIVCLCLTEDKADYLELSPMVEHNESVNQTAFTISIEAKKGVTTGVSATDRVTTIKTACKNGALPHELAKPGHVFPLRAKDGGVLTRRGHTEGTVDLMRLAELTPAGVLCEVTNSDGSMAKTPEIIIFAEQHHLPVLTVNDIALYRKEKSN</sequence>
<dbReference type="EC" id="4.1.99.12" evidence="1"/>
<dbReference type="EMBL" id="AF233628">
    <property type="protein sequence ID" value="AAF71514.1"/>
    <property type="molecule type" value="Genomic_DNA"/>
</dbReference>
<dbReference type="RefSeq" id="WP_155658539.1">
    <property type="nucleotide sequence ID" value="NZ_WOBE01000092.1"/>
</dbReference>
<dbReference type="SMR" id="Q9L6K8"/>
<dbReference type="UniPathway" id="UPA00275">
    <property type="reaction ID" value="UER00399"/>
</dbReference>
<dbReference type="GO" id="GO:0005829">
    <property type="term" value="C:cytosol"/>
    <property type="evidence" value="ECO:0007669"/>
    <property type="project" value="TreeGrafter"/>
</dbReference>
<dbReference type="GO" id="GO:0008686">
    <property type="term" value="F:3,4-dihydroxy-2-butanone-4-phosphate synthase activity"/>
    <property type="evidence" value="ECO:0007669"/>
    <property type="project" value="UniProtKB-UniRule"/>
</dbReference>
<dbReference type="GO" id="GO:0000287">
    <property type="term" value="F:magnesium ion binding"/>
    <property type="evidence" value="ECO:0007669"/>
    <property type="project" value="UniProtKB-UniRule"/>
</dbReference>
<dbReference type="GO" id="GO:0030145">
    <property type="term" value="F:manganese ion binding"/>
    <property type="evidence" value="ECO:0007669"/>
    <property type="project" value="UniProtKB-UniRule"/>
</dbReference>
<dbReference type="GO" id="GO:0009231">
    <property type="term" value="P:riboflavin biosynthetic process"/>
    <property type="evidence" value="ECO:0007669"/>
    <property type="project" value="UniProtKB-UniRule"/>
</dbReference>
<dbReference type="FunFam" id="3.90.870.10:FF:000002">
    <property type="entry name" value="3,4-dihydroxy-2-butanone 4-phosphate synthase"/>
    <property type="match status" value="1"/>
</dbReference>
<dbReference type="Gene3D" id="3.90.870.10">
    <property type="entry name" value="DHBP synthase"/>
    <property type="match status" value="1"/>
</dbReference>
<dbReference type="HAMAP" id="MF_00180">
    <property type="entry name" value="RibB"/>
    <property type="match status" value="1"/>
</dbReference>
<dbReference type="InterPro" id="IPR017945">
    <property type="entry name" value="DHBP_synth_RibB-like_a/b_dom"/>
</dbReference>
<dbReference type="InterPro" id="IPR000422">
    <property type="entry name" value="DHBP_synthase_RibB"/>
</dbReference>
<dbReference type="NCBIfam" id="TIGR00506">
    <property type="entry name" value="ribB"/>
    <property type="match status" value="1"/>
</dbReference>
<dbReference type="PANTHER" id="PTHR21327:SF38">
    <property type="entry name" value="3,4-DIHYDROXY-2-BUTANONE 4-PHOSPHATE SYNTHASE"/>
    <property type="match status" value="1"/>
</dbReference>
<dbReference type="PANTHER" id="PTHR21327">
    <property type="entry name" value="GTP CYCLOHYDROLASE II-RELATED"/>
    <property type="match status" value="1"/>
</dbReference>
<dbReference type="Pfam" id="PF00926">
    <property type="entry name" value="DHBP_synthase"/>
    <property type="match status" value="1"/>
</dbReference>
<dbReference type="SUPFAM" id="SSF55821">
    <property type="entry name" value="YrdC/RibB"/>
    <property type="match status" value="1"/>
</dbReference>
<accession>Q9L6K8</accession>